<comment type="function">
    <text evidence="1">A scaffold on which IscS assembles Fe-S clusters. Subsequently gives the nascent cluster to other proteins. It is likely that Fe-S cluster coordination is flexible as the role of this complex is to build and then hand off Fe-S clusters (By similarity).</text>
</comment>
<comment type="subunit">
    <text evidence="1">Forms a heterotetramer with IscS; each subunit of the IscS dimer contacts an IscU monomer.</text>
</comment>
<comment type="similarity">
    <text evidence="2">Belongs to the NifU family.</text>
</comment>
<reference key="1">
    <citation type="journal article" date="1999" name="Nature">
        <title>Evidence for lateral gene transfer between Archaea and Bacteria from genome sequence of Thermotoga maritima.</title>
        <authorList>
            <person name="Nelson K.E."/>
            <person name="Clayton R.A."/>
            <person name="Gill S.R."/>
            <person name="Gwinn M.L."/>
            <person name="Dodson R.J."/>
            <person name="Haft D.H."/>
            <person name="Hickey E.K."/>
            <person name="Peterson J.D."/>
            <person name="Nelson W.C."/>
            <person name="Ketchum K.A."/>
            <person name="McDonald L.A."/>
            <person name="Utterback T.R."/>
            <person name="Malek J.A."/>
            <person name="Linher K.D."/>
            <person name="Garrett M.M."/>
            <person name="Stewart A.M."/>
            <person name="Cotton M.D."/>
            <person name="Pratt M.S."/>
            <person name="Phillips C.A."/>
            <person name="Richardson D.L."/>
            <person name="Heidelberg J.F."/>
            <person name="Sutton G.G."/>
            <person name="Fleischmann R.D."/>
            <person name="Eisen J.A."/>
            <person name="White O."/>
            <person name="Salzberg S.L."/>
            <person name="Smith H.O."/>
            <person name="Venter J.C."/>
            <person name="Fraser C.M."/>
        </authorList>
    </citation>
    <scope>NUCLEOTIDE SEQUENCE [LARGE SCALE GENOMIC DNA]</scope>
    <source>
        <strain>ATCC 43589 / DSM 3109 / JCM 10099 / NBRC 100826 / MSB8</strain>
    </source>
</reference>
<accession>Q9X192</accession>
<protein>
    <recommendedName>
        <fullName>Iron-sulfur cluster assembly scaffold protein IscU</fullName>
    </recommendedName>
    <alternativeName>
        <fullName>Sulfur acceptor protein IscU</fullName>
    </alternativeName>
</protein>
<keyword id="KW-1185">Reference proteome</keyword>
<gene>
    <name type="primary">iscU</name>
    <name type="synonym">nifU</name>
    <name type="ordered locus">TM_1372</name>
</gene>
<organism>
    <name type="scientific">Thermotoga maritima (strain ATCC 43589 / DSM 3109 / JCM 10099 / NBRC 100826 / MSB8)</name>
    <dbReference type="NCBI Taxonomy" id="243274"/>
    <lineage>
        <taxon>Bacteria</taxon>
        <taxon>Thermotogati</taxon>
        <taxon>Thermotogota</taxon>
        <taxon>Thermotogae</taxon>
        <taxon>Thermotogales</taxon>
        <taxon>Thermotogaceae</taxon>
        <taxon>Thermotoga</taxon>
    </lineage>
</organism>
<name>ISCU_THEMA</name>
<feature type="chain" id="PRO_0000166190" description="Iron-sulfur cluster assembly scaffold protein IscU">
    <location>
        <begin position="1"/>
        <end position="142"/>
    </location>
</feature>
<proteinExistence type="inferred from homology"/>
<sequence length="142" mass="16071">MVFKMMYSEAILDYANSKKFRGKLDDATVIEEGKNISCGDEITLYLKVEDGVVKDAKFEGMGCVISQASASLMLERIIGERVEEIFSLIEEAEKMSRGENFDEGKLKNVTLMSDIKNYPARVKCFILAWKTLKEALKKISRP</sequence>
<evidence type="ECO:0000250" key="1"/>
<evidence type="ECO:0000305" key="2"/>
<dbReference type="EMBL" id="AE000512">
    <property type="protein sequence ID" value="AAD36442.1"/>
    <property type="molecule type" value="Genomic_DNA"/>
</dbReference>
<dbReference type="PIR" id="E72260">
    <property type="entry name" value="E72260"/>
</dbReference>
<dbReference type="RefSeq" id="NP_229173.1">
    <property type="nucleotide sequence ID" value="NC_000853.1"/>
</dbReference>
<dbReference type="SMR" id="Q9X192"/>
<dbReference type="FunCoup" id="Q9X192">
    <property type="interactions" value="248"/>
</dbReference>
<dbReference type="STRING" id="243274.TM_1372"/>
<dbReference type="PaxDb" id="243274-THEMA_07475"/>
<dbReference type="EnsemblBacteria" id="AAD36442">
    <property type="protein sequence ID" value="AAD36442"/>
    <property type="gene ID" value="TM_1372"/>
</dbReference>
<dbReference type="KEGG" id="tma:TM1372"/>
<dbReference type="KEGG" id="tmi:THEMA_07475"/>
<dbReference type="PATRIC" id="fig|243274.18.peg.1441"/>
<dbReference type="eggNOG" id="COG0822">
    <property type="taxonomic scope" value="Bacteria"/>
</dbReference>
<dbReference type="InParanoid" id="Q9X192"/>
<dbReference type="OrthoDB" id="9804157at2"/>
<dbReference type="Proteomes" id="UP000008183">
    <property type="component" value="Chromosome"/>
</dbReference>
<dbReference type="GO" id="GO:0005737">
    <property type="term" value="C:cytoplasm"/>
    <property type="evidence" value="ECO:0000318"/>
    <property type="project" value="GO_Central"/>
</dbReference>
<dbReference type="GO" id="GO:0051537">
    <property type="term" value="F:2 iron, 2 sulfur cluster binding"/>
    <property type="evidence" value="ECO:0000318"/>
    <property type="project" value="GO_Central"/>
</dbReference>
<dbReference type="GO" id="GO:0008198">
    <property type="term" value="F:ferrous iron binding"/>
    <property type="evidence" value="ECO:0000318"/>
    <property type="project" value="GO_Central"/>
</dbReference>
<dbReference type="GO" id="GO:0006879">
    <property type="term" value="P:intracellular iron ion homeostasis"/>
    <property type="evidence" value="ECO:0000318"/>
    <property type="project" value="GO_Central"/>
</dbReference>
<dbReference type="GO" id="GO:0016226">
    <property type="term" value="P:iron-sulfur cluster assembly"/>
    <property type="evidence" value="ECO:0007669"/>
    <property type="project" value="InterPro"/>
</dbReference>
<dbReference type="CDD" id="cd06664">
    <property type="entry name" value="IscU_like"/>
    <property type="match status" value="1"/>
</dbReference>
<dbReference type="FunFam" id="3.90.1010.10:FF:000002">
    <property type="entry name" value="Iron-sulfur cluster assembly scaffold protein NifU"/>
    <property type="match status" value="1"/>
</dbReference>
<dbReference type="Gene3D" id="3.90.1010.10">
    <property type="match status" value="1"/>
</dbReference>
<dbReference type="InterPro" id="IPR002871">
    <property type="entry name" value="NIF_FeS_clus_asmbl_NifU_N"/>
</dbReference>
<dbReference type="NCBIfam" id="TIGR01994">
    <property type="entry name" value="SUF_scaf_2"/>
    <property type="match status" value="1"/>
</dbReference>
<dbReference type="PANTHER" id="PTHR10093">
    <property type="entry name" value="IRON-SULFUR CLUSTER ASSEMBLY ENZYME NIFU HOMOLOG"/>
    <property type="match status" value="1"/>
</dbReference>
<dbReference type="Pfam" id="PF01592">
    <property type="entry name" value="NifU_N"/>
    <property type="match status" value="1"/>
</dbReference>
<dbReference type="SUPFAM" id="SSF82649">
    <property type="entry name" value="SufE/NifU"/>
    <property type="match status" value="1"/>
</dbReference>